<proteinExistence type="inferred from homology"/>
<evidence type="ECO:0000250" key="1">
    <source>
        <dbReference type="UniProtKB" id="P75796"/>
    </source>
</evidence>
<evidence type="ECO:0000255" key="2">
    <source>
        <dbReference type="PROSITE-ProRule" id="PRU00434"/>
    </source>
</evidence>
<evidence type="ECO:0000305" key="3"/>
<gene>
    <name evidence="1" type="primary">gsiA</name>
    <name type="ordered locus">SPA1907</name>
</gene>
<protein>
    <recommendedName>
        <fullName evidence="1">Glutathione import ATP-binding protein GsiA</fullName>
        <ecNumber evidence="1">7.4.2.10</ecNumber>
    </recommendedName>
</protein>
<sequence>MPHSDELDSRDVLSVSGLNIAFHHEGQQIDAVRNVSLRLKRGETLAIVGESGSGKSVTALALMRLIEQSGANVRCGEMLLRRRNRQVIELSEQSDAQMRRVRGADIAMIFQEPMTSLNPVFTVGEQIAESIRLHQGASHEEALAEAKRMLDQVRIPESQAILSRYPHQLSGGMRQRVMIAMALSCRPAVLIADEPTTALDVTIQAQILQLIKVLQQEMSMGVIFITHDMGVVADIADRVLVMYQGEAVETGSVEQIFHAPTHPYTQTLLAAVPQLGAMRGHSLPRRFPLISADEPALYESQIEQDTVVEGEPILQVRGLVTRFPLRSGLFNRVTREVHAVENISFDLWPGETLSLVGESGSGKSTTGRALLRLVESRQGEIIFNGQRIDSLSAGKLQPLRRDIQCIFQDPYASLDPRQTVGYSIMEPLRIHGLGQGDAAAKRVAWLLERVGLRPEHAWRYPHEFSGGQRQRICIARALALNPKVIIADEAVSALDVSVRGQIINLLLDLQREMGIAYLFISHDMAVVERISHRVAVMYLGQIVEMGPRRAVFENPQHPYTRKLMAAVPVADPSRHRPRRVLLSDDIPSNIHKRGEETPAVSLQLVGPGHYVARPLQDNALSRL</sequence>
<feature type="chain" id="PRO_0000280024" description="Glutathione import ATP-binding protein GsiA">
    <location>
        <begin position="1"/>
        <end position="623"/>
    </location>
</feature>
<feature type="domain" description="ABC transporter 1" evidence="2">
    <location>
        <begin position="15"/>
        <end position="269"/>
    </location>
</feature>
<feature type="domain" description="ABC transporter 2" evidence="2">
    <location>
        <begin position="325"/>
        <end position="564"/>
    </location>
</feature>
<feature type="binding site" evidence="2">
    <location>
        <begin position="49"/>
        <end position="56"/>
    </location>
    <ligand>
        <name>ATP</name>
        <dbReference type="ChEBI" id="CHEBI:30616"/>
    </ligand>
</feature>
<feature type="binding site" evidence="2">
    <location>
        <begin position="357"/>
        <end position="364"/>
    </location>
    <ligand>
        <name>ATP</name>
        <dbReference type="ChEBI" id="CHEBI:30616"/>
    </ligand>
</feature>
<accession>Q5PGP3</accession>
<dbReference type="EC" id="7.4.2.10" evidence="1"/>
<dbReference type="EMBL" id="CP000026">
    <property type="protein sequence ID" value="AAV77818.1"/>
    <property type="molecule type" value="Genomic_DNA"/>
</dbReference>
<dbReference type="RefSeq" id="WP_001120574.1">
    <property type="nucleotide sequence ID" value="NC_006511.1"/>
</dbReference>
<dbReference type="SMR" id="Q5PGP3"/>
<dbReference type="KEGG" id="spt:SPA1907"/>
<dbReference type="HOGENOM" id="CLU_000604_86_2_6"/>
<dbReference type="Proteomes" id="UP000008185">
    <property type="component" value="Chromosome"/>
</dbReference>
<dbReference type="GO" id="GO:0005886">
    <property type="term" value="C:plasma membrane"/>
    <property type="evidence" value="ECO:0007669"/>
    <property type="project" value="UniProtKB-SubCell"/>
</dbReference>
<dbReference type="GO" id="GO:0005524">
    <property type="term" value="F:ATP binding"/>
    <property type="evidence" value="ECO:0007669"/>
    <property type="project" value="UniProtKB-KW"/>
</dbReference>
<dbReference type="GO" id="GO:0016887">
    <property type="term" value="F:ATP hydrolysis activity"/>
    <property type="evidence" value="ECO:0007669"/>
    <property type="project" value="InterPro"/>
</dbReference>
<dbReference type="GO" id="GO:0015833">
    <property type="term" value="P:peptide transport"/>
    <property type="evidence" value="ECO:0007669"/>
    <property type="project" value="InterPro"/>
</dbReference>
<dbReference type="GO" id="GO:0055085">
    <property type="term" value="P:transmembrane transport"/>
    <property type="evidence" value="ECO:0007669"/>
    <property type="project" value="UniProtKB-ARBA"/>
</dbReference>
<dbReference type="CDD" id="cd03257">
    <property type="entry name" value="ABC_NikE_OppD_transporters"/>
    <property type="match status" value="2"/>
</dbReference>
<dbReference type="FunFam" id="3.40.50.300:FF:000016">
    <property type="entry name" value="Oligopeptide ABC transporter ATP-binding component"/>
    <property type="match status" value="2"/>
</dbReference>
<dbReference type="Gene3D" id="3.40.50.300">
    <property type="entry name" value="P-loop containing nucleotide triphosphate hydrolases"/>
    <property type="match status" value="2"/>
</dbReference>
<dbReference type="InterPro" id="IPR003593">
    <property type="entry name" value="AAA+_ATPase"/>
</dbReference>
<dbReference type="InterPro" id="IPR050319">
    <property type="entry name" value="ABC_transp_ATP-bind"/>
</dbReference>
<dbReference type="InterPro" id="IPR003439">
    <property type="entry name" value="ABC_transporter-like_ATP-bd"/>
</dbReference>
<dbReference type="InterPro" id="IPR017871">
    <property type="entry name" value="ABC_transporter-like_CS"/>
</dbReference>
<dbReference type="InterPro" id="IPR013563">
    <property type="entry name" value="Oligopep_ABC_C"/>
</dbReference>
<dbReference type="InterPro" id="IPR027417">
    <property type="entry name" value="P-loop_NTPase"/>
</dbReference>
<dbReference type="NCBIfam" id="NF007613">
    <property type="entry name" value="PRK10261.1"/>
    <property type="match status" value="1"/>
</dbReference>
<dbReference type="NCBIfam" id="NF007739">
    <property type="entry name" value="PRK10419.1"/>
    <property type="match status" value="2"/>
</dbReference>
<dbReference type="NCBIfam" id="NF008453">
    <property type="entry name" value="PRK11308.1"/>
    <property type="match status" value="2"/>
</dbReference>
<dbReference type="PANTHER" id="PTHR43776:SF15">
    <property type="entry name" value="GLUTATHIONE IMPORT ATP-BINDING PROTEIN GSIA"/>
    <property type="match status" value="1"/>
</dbReference>
<dbReference type="PANTHER" id="PTHR43776">
    <property type="entry name" value="TRANSPORT ATP-BINDING PROTEIN"/>
    <property type="match status" value="1"/>
</dbReference>
<dbReference type="Pfam" id="PF00005">
    <property type="entry name" value="ABC_tran"/>
    <property type="match status" value="2"/>
</dbReference>
<dbReference type="Pfam" id="PF08352">
    <property type="entry name" value="oligo_HPY"/>
    <property type="match status" value="2"/>
</dbReference>
<dbReference type="SMART" id="SM00382">
    <property type="entry name" value="AAA"/>
    <property type="match status" value="2"/>
</dbReference>
<dbReference type="SUPFAM" id="SSF52540">
    <property type="entry name" value="P-loop containing nucleoside triphosphate hydrolases"/>
    <property type="match status" value="2"/>
</dbReference>
<dbReference type="PROSITE" id="PS00211">
    <property type="entry name" value="ABC_TRANSPORTER_1"/>
    <property type="match status" value="2"/>
</dbReference>
<dbReference type="PROSITE" id="PS50893">
    <property type="entry name" value="ABC_TRANSPORTER_2"/>
    <property type="match status" value="2"/>
</dbReference>
<reference key="1">
    <citation type="journal article" date="2004" name="Nat. Genet.">
        <title>Comparison of genome degradation in Paratyphi A and Typhi, human-restricted serovars of Salmonella enterica that cause typhoid.</title>
        <authorList>
            <person name="McClelland M."/>
            <person name="Sanderson K.E."/>
            <person name="Clifton S.W."/>
            <person name="Latreille P."/>
            <person name="Porwollik S."/>
            <person name="Sabo A."/>
            <person name="Meyer R."/>
            <person name="Bieri T."/>
            <person name="Ozersky P."/>
            <person name="McLellan M."/>
            <person name="Harkins C.R."/>
            <person name="Wang C."/>
            <person name="Nguyen C."/>
            <person name="Berghoff A."/>
            <person name="Elliott G."/>
            <person name="Kohlberg S."/>
            <person name="Strong C."/>
            <person name="Du F."/>
            <person name="Carter J."/>
            <person name="Kremizki C."/>
            <person name="Layman D."/>
            <person name="Leonard S."/>
            <person name="Sun H."/>
            <person name="Fulton L."/>
            <person name="Nash W."/>
            <person name="Miner T."/>
            <person name="Minx P."/>
            <person name="Delehaunty K."/>
            <person name="Fronick C."/>
            <person name="Magrini V."/>
            <person name="Nhan M."/>
            <person name="Warren W."/>
            <person name="Florea L."/>
            <person name="Spieth J."/>
            <person name="Wilson R.K."/>
        </authorList>
    </citation>
    <scope>NUCLEOTIDE SEQUENCE [LARGE SCALE GENOMIC DNA]</scope>
    <source>
        <strain>ATCC 9150 / SARB42</strain>
    </source>
</reference>
<comment type="function">
    <text evidence="1">Part of the ABC transporter complex GsiABCD involved in glutathione import. Responsible for energy coupling to the transport system.</text>
</comment>
<comment type="catalytic activity">
    <reaction evidence="1">
        <text>glutathione(out) + ATP + H2O = glutathione(in) + ADP + phosphate + H(+)</text>
        <dbReference type="Rhea" id="RHEA:29791"/>
        <dbReference type="ChEBI" id="CHEBI:15377"/>
        <dbReference type="ChEBI" id="CHEBI:15378"/>
        <dbReference type="ChEBI" id="CHEBI:30616"/>
        <dbReference type="ChEBI" id="CHEBI:43474"/>
        <dbReference type="ChEBI" id="CHEBI:57925"/>
        <dbReference type="ChEBI" id="CHEBI:456216"/>
        <dbReference type="EC" id="7.4.2.10"/>
    </reaction>
</comment>
<comment type="subunit">
    <text evidence="1">The complex is composed of two ATP-binding proteins (GsiA), two transmembrane proteins (GsiC and GsiD) and a solute-binding protein (GsiB).</text>
</comment>
<comment type="subcellular location">
    <subcellularLocation>
        <location evidence="1">Cell inner membrane</location>
        <topology evidence="1">Peripheral membrane protein</topology>
    </subcellularLocation>
</comment>
<comment type="similarity">
    <text evidence="3">Belongs to the ABC transporter superfamily. Glutathione importer (TC 3.A.1.5.11) family.</text>
</comment>
<organism>
    <name type="scientific">Salmonella paratyphi A (strain ATCC 9150 / SARB42)</name>
    <dbReference type="NCBI Taxonomy" id="295319"/>
    <lineage>
        <taxon>Bacteria</taxon>
        <taxon>Pseudomonadati</taxon>
        <taxon>Pseudomonadota</taxon>
        <taxon>Gammaproteobacteria</taxon>
        <taxon>Enterobacterales</taxon>
        <taxon>Enterobacteriaceae</taxon>
        <taxon>Salmonella</taxon>
    </lineage>
</organism>
<keyword id="KW-0067">ATP-binding</keyword>
<keyword id="KW-0997">Cell inner membrane</keyword>
<keyword id="KW-1003">Cell membrane</keyword>
<keyword id="KW-0378">Hydrolase</keyword>
<keyword id="KW-0472">Membrane</keyword>
<keyword id="KW-0547">Nucleotide-binding</keyword>
<keyword id="KW-0677">Repeat</keyword>
<keyword id="KW-1278">Translocase</keyword>
<keyword id="KW-0813">Transport</keyword>
<name>GSIA_SALPA</name>